<comment type="function">
    <text evidence="3">Orphan receptor. Displays a significant level of constitutive activity. Its effect is mediated by G(s)-alpha protein that stimulate adenylate cyclase, resulting in an elevation of intracellular cAMP.</text>
</comment>
<comment type="subcellular location">
    <subcellularLocation>
        <location>Cell membrane</location>
        <topology>Multi-pass membrane protein</topology>
    </subcellularLocation>
</comment>
<comment type="tissue specificity">
    <text evidence="3 4">Highly expressed in the CNS, the highest expression is seen in the amygdala, hippocampus and thalamus. Weak expression is detected in testis. Down-regulated in glioblastoma.</text>
</comment>
<comment type="similarity">
    <text evidence="2">Belongs to the G-protein coupled receptor 1 family.</text>
</comment>
<evidence type="ECO:0000255" key="1"/>
<evidence type="ECO:0000255" key="2">
    <source>
        <dbReference type="PROSITE-ProRule" id="PRU00521"/>
    </source>
</evidence>
<evidence type="ECO:0000269" key="3">
    <source>
    </source>
</evidence>
<evidence type="ECO:0000269" key="4">
    <source>
    </source>
</evidence>
<organism>
    <name type="scientific">Homo sapiens</name>
    <name type="common">Human</name>
    <dbReference type="NCBI Taxonomy" id="9606"/>
    <lineage>
        <taxon>Eukaryota</taxon>
        <taxon>Metazoa</taxon>
        <taxon>Chordata</taxon>
        <taxon>Craniata</taxon>
        <taxon>Vertebrata</taxon>
        <taxon>Euteleostomi</taxon>
        <taxon>Mammalia</taxon>
        <taxon>Eutheria</taxon>
        <taxon>Euarchontoglires</taxon>
        <taxon>Primates</taxon>
        <taxon>Haplorrhini</taxon>
        <taxon>Catarrhini</taxon>
        <taxon>Hominidae</taxon>
        <taxon>Homo</taxon>
    </lineage>
</organism>
<name>GPR26_HUMAN</name>
<dbReference type="EMBL" id="AJ505757">
    <property type="protein sequence ID" value="CAD44281.1"/>
    <property type="molecule type" value="mRNA"/>
</dbReference>
<dbReference type="EMBL" id="BC112011">
    <property type="protein sequence ID" value="AAI12012.1"/>
    <property type="molecule type" value="mRNA"/>
</dbReference>
<dbReference type="EMBL" id="BC113462">
    <property type="protein sequence ID" value="AAI13463.1"/>
    <property type="molecule type" value="mRNA"/>
</dbReference>
<dbReference type="CCDS" id="CCDS7636.1"/>
<dbReference type="RefSeq" id="NP_703143.1">
    <property type="nucleotide sequence ID" value="NM_153442.4"/>
</dbReference>
<dbReference type="SMR" id="Q8NDV2"/>
<dbReference type="BioGRID" id="109108">
    <property type="interactions" value="1"/>
</dbReference>
<dbReference type="CORUM" id="Q8NDV2"/>
<dbReference type="FunCoup" id="Q8NDV2">
    <property type="interactions" value="345"/>
</dbReference>
<dbReference type="STRING" id="9606.ENSP00000284674"/>
<dbReference type="ChEMBL" id="CHEMBL4523895"/>
<dbReference type="iPTMnet" id="Q8NDV2"/>
<dbReference type="PhosphoSitePlus" id="Q8NDV2"/>
<dbReference type="BioMuta" id="GPR26"/>
<dbReference type="DMDM" id="37537804"/>
<dbReference type="MassIVE" id="Q8NDV2"/>
<dbReference type="PaxDb" id="9606-ENSP00000284674"/>
<dbReference type="PeptideAtlas" id="Q8NDV2"/>
<dbReference type="ProteomicsDB" id="73057"/>
<dbReference type="Antibodypedia" id="19086">
    <property type="antibodies" value="167 antibodies from 26 providers"/>
</dbReference>
<dbReference type="DNASU" id="2849"/>
<dbReference type="Ensembl" id="ENST00000284674.2">
    <property type="protein sequence ID" value="ENSP00000284674.1"/>
    <property type="gene ID" value="ENSG00000154478.4"/>
</dbReference>
<dbReference type="GeneID" id="2849"/>
<dbReference type="KEGG" id="hsa:2849"/>
<dbReference type="MANE-Select" id="ENST00000284674.2">
    <property type="protein sequence ID" value="ENSP00000284674.1"/>
    <property type="RefSeq nucleotide sequence ID" value="NM_153442.4"/>
    <property type="RefSeq protein sequence ID" value="NP_703143.1"/>
</dbReference>
<dbReference type="UCSC" id="uc001lhh.4">
    <property type="organism name" value="human"/>
</dbReference>
<dbReference type="AGR" id="HGNC:4481"/>
<dbReference type="CTD" id="2849"/>
<dbReference type="DisGeNET" id="2849"/>
<dbReference type="GeneCards" id="GPR26"/>
<dbReference type="HGNC" id="HGNC:4481">
    <property type="gene designation" value="GPR26"/>
</dbReference>
<dbReference type="HPA" id="ENSG00000154478">
    <property type="expression patterns" value="Tissue enriched (brain)"/>
</dbReference>
<dbReference type="MalaCards" id="GPR26"/>
<dbReference type="MIM" id="604847">
    <property type="type" value="gene"/>
</dbReference>
<dbReference type="neXtProt" id="NX_Q8NDV2"/>
<dbReference type="OpenTargets" id="ENSG00000154478"/>
<dbReference type="PharmGKB" id="PA28869"/>
<dbReference type="VEuPathDB" id="HostDB:ENSG00000154478"/>
<dbReference type="eggNOG" id="KOG3656">
    <property type="taxonomic scope" value="Eukaryota"/>
</dbReference>
<dbReference type="GeneTree" id="ENSGT00950000183001"/>
<dbReference type="HOGENOM" id="CLU_009579_3_5_1"/>
<dbReference type="InParanoid" id="Q8NDV2"/>
<dbReference type="OMA" id="WLGFHHL"/>
<dbReference type="OrthoDB" id="6159456at2759"/>
<dbReference type="PAN-GO" id="Q8NDV2">
    <property type="GO annotations" value="2 GO annotations based on evolutionary models"/>
</dbReference>
<dbReference type="PhylomeDB" id="Q8NDV2"/>
<dbReference type="TreeFam" id="TF332434"/>
<dbReference type="PathwayCommons" id="Q8NDV2"/>
<dbReference type="BioGRID-ORCS" id="2849">
    <property type="hits" value="10 hits in 1139 CRISPR screens"/>
</dbReference>
<dbReference type="ChiTaRS" id="GPR26">
    <property type="organism name" value="human"/>
</dbReference>
<dbReference type="GeneWiki" id="GPR26"/>
<dbReference type="GenomeRNAi" id="2849"/>
<dbReference type="Pharos" id="Q8NDV2">
    <property type="development level" value="Tbio"/>
</dbReference>
<dbReference type="PRO" id="PR:Q8NDV2"/>
<dbReference type="Proteomes" id="UP000005640">
    <property type="component" value="Chromosome 10"/>
</dbReference>
<dbReference type="RNAct" id="Q8NDV2">
    <property type="molecule type" value="protein"/>
</dbReference>
<dbReference type="Bgee" id="ENSG00000154478">
    <property type="expression patterns" value="Expressed in endothelial cell and 103 other cell types or tissues"/>
</dbReference>
<dbReference type="GO" id="GO:0005886">
    <property type="term" value="C:plasma membrane"/>
    <property type="evidence" value="ECO:0007669"/>
    <property type="project" value="UniProtKB-SubCell"/>
</dbReference>
<dbReference type="GO" id="GO:0004930">
    <property type="term" value="F:G protein-coupled receptor activity"/>
    <property type="evidence" value="ECO:0000314"/>
    <property type="project" value="UniProtKB"/>
</dbReference>
<dbReference type="GO" id="GO:0007189">
    <property type="term" value="P:adenylate cyclase-activating G protein-coupled receptor signaling pathway"/>
    <property type="evidence" value="ECO:0000314"/>
    <property type="project" value="UniProtKB"/>
</dbReference>
<dbReference type="CDD" id="cd15219">
    <property type="entry name" value="7tmA_GPR26_GPR78-like"/>
    <property type="match status" value="1"/>
</dbReference>
<dbReference type="FunFam" id="1.20.1070.10:FF:000095">
    <property type="entry name" value="G-protein coupled receptor 26"/>
    <property type="match status" value="1"/>
</dbReference>
<dbReference type="Gene3D" id="1.20.1070.10">
    <property type="entry name" value="Rhodopsin 7-helix transmembrane proteins"/>
    <property type="match status" value="1"/>
</dbReference>
<dbReference type="InterPro" id="IPR051880">
    <property type="entry name" value="GPC_Orphan_Receptors"/>
</dbReference>
<dbReference type="InterPro" id="IPR000276">
    <property type="entry name" value="GPCR_Rhodpsn"/>
</dbReference>
<dbReference type="InterPro" id="IPR017452">
    <property type="entry name" value="GPCR_Rhodpsn_7TM"/>
</dbReference>
<dbReference type="InterPro" id="IPR049579">
    <property type="entry name" value="GPR26/78-like"/>
</dbReference>
<dbReference type="PANTHER" id="PTHR24245">
    <property type="entry name" value="G-PROTEIN COUPLED RECEPTOR"/>
    <property type="match status" value="1"/>
</dbReference>
<dbReference type="PANTHER" id="PTHR24245:SF6">
    <property type="entry name" value="G-PROTEIN COUPLED RECEPTOR 26"/>
    <property type="match status" value="1"/>
</dbReference>
<dbReference type="Pfam" id="PF00001">
    <property type="entry name" value="7tm_1"/>
    <property type="match status" value="1"/>
</dbReference>
<dbReference type="PRINTS" id="PR00237">
    <property type="entry name" value="GPCRRHODOPSN"/>
</dbReference>
<dbReference type="SUPFAM" id="SSF81321">
    <property type="entry name" value="Family A G protein-coupled receptor-like"/>
    <property type="match status" value="1"/>
</dbReference>
<dbReference type="PROSITE" id="PS50262">
    <property type="entry name" value="G_PROTEIN_RECEP_F1_2"/>
    <property type="match status" value="1"/>
</dbReference>
<feature type="chain" id="PRO_0000069545" description="G-protein coupled receptor 26">
    <location>
        <begin position="1"/>
        <end position="337"/>
    </location>
</feature>
<feature type="topological domain" description="Extracellular" evidence="1">
    <location>
        <begin position="1"/>
        <end position="10"/>
    </location>
</feature>
<feature type="transmembrane region" description="Helical; Name=1" evidence="1">
    <location>
        <begin position="11"/>
        <end position="31"/>
    </location>
</feature>
<feature type="topological domain" description="Cytoplasmic" evidence="1">
    <location>
        <begin position="32"/>
        <end position="47"/>
    </location>
</feature>
<feature type="transmembrane region" description="Helical; Name=2" evidence="1">
    <location>
        <begin position="48"/>
        <end position="68"/>
    </location>
</feature>
<feature type="topological domain" description="Extracellular" evidence="1">
    <location>
        <begin position="69"/>
        <end position="81"/>
    </location>
</feature>
<feature type="transmembrane region" description="Helical; Name=3" evidence="1">
    <location>
        <begin position="82"/>
        <end position="102"/>
    </location>
</feature>
<feature type="topological domain" description="Cytoplasmic" evidence="1">
    <location>
        <begin position="103"/>
        <end position="123"/>
    </location>
</feature>
<feature type="transmembrane region" description="Helical; Name=4" evidence="1">
    <location>
        <begin position="124"/>
        <end position="144"/>
    </location>
</feature>
<feature type="topological domain" description="Extracellular" evidence="1">
    <location>
        <begin position="145"/>
        <end position="168"/>
    </location>
</feature>
<feature type="transmembrane region" description="Helical; Name=5" evidence="1">
    <location>
        <begin position="169"/>
        <end position="189"/>
    </location>
</feature>
<feature type="topological domain" description="Cytoplasmic" evidence="1">
    <location>
        <begin position="190"/>
        <end position="245"/>
    </location>
</feature>
<feature type="transmembrane region" description="Helical; Name=6" evidence="1">
    <location>
        <begin position="246"/>
        <end position="266"/>
    </location>
</feature>
<feature type="topological domain" description="Extracellular" evidence="1">
    <location>
        <begin position="267"/>
        <end position="276"/>
    </location>
</feature>
<feature type="transmembrane region" description="Helical; Name=7" evidence="1">
    <location>
        <begin position="277"/>
        <end position="297"/>
    </location>
</feature>
<feature type="topological domain" description="Cytoplasmic" evidence="1">
    <location>
        <begin position="298"/>
        <end position="337"/>
    </location>
</feature>
<feature type="disulfide bond" evidence="2">
    <location>
        <begin position="79"/>
        <end position="156"/>
    </location>
</feature>
<feature type="mutagenesis site" description="No effect on constitutive activity; when associated with E-236." evidence="3">
    <original>R</original>
    <variation>A</variation>
    <location>
        <position position="104"/>
    </location>
</feature>
<feature type="mutagenesis site" description="No effect on constitutive activity." evidence="3">
    <original>R</original>
    <variation>Q</variation>
    <variation>E</variation>
    <location>
        <position position="104"/>
    </location>
</feature>
<feature type="mutagenesis site" description="No effect on constitutive activity; when associated with E-236." evidence="3">
    <original>R</original>
    <variation>Q</variation>
    <location>
        <position position="104"/>
    </location>
</feature>
<feature type="mutagenesis site" description="No effect on constitutive activity." evidence="3">
    <original>R</original>
    <variation>A</variation>
    <variation>Q</variation>
    <location>
        <position position="236"/>
    </location>
</feature>
<feature type="mutagenesis site" description="No effect on constitutive activity; when associated with A-104. No effect on constitutive activity; when associated with Q-104." evidence="3">
    <original>R</original>
    <variation>E</variation>
    <location>
        <position position="236"/>
    </location>
</feature>
<protein>
    <recommendedName>
        <fullName>G-protein coupled receptor 26</fullName>
    </recommendedName>
</protein>
<keyword id="KW-1003">Cell membrane</keyword>
<keyword id="KW-1015">Disulfide bond</keyword>
<keyword id="KW-0297">G-protein coupled receptor</keyword>
<keyword id="KW-0472">Membrane</keyword>
<keyword id="KW-0675">Receptor</keyword>
<keyword id="KW-1185">Reference proteome</keyword>
<keyword id="KW-0807">Transducer</keyword>
<keyword id="KW-0812">Transmembrane</keyword>
<keyword id="KW-1133">Transmembrane helix</keyword>
<reference key="1">
    <citation type="submission" date="2002-08" db="EMBL/GenBank/DDBJ databases">
        <title>Sequence of the human homologue of the rat orphan G protein-coupled receptor GPR26 mRNA.</title>
        <authorList>
            <person name="Jones G."/>
            <person name="Boulay J.L."/>
            <person name="Maier D."/>
            <person name="Merlo A."/>
        </authorList>
    </citation>
    <scope>NUCLEOTIDE SEQUENCE [MRNA]</scope>
    <source>
        <tissue>Brain</tissue>
    </source>
</reference>
<reference key="2">
    <citation type="submission" date="2002-08" db="EMBL/GenBank/DDBJ databases">
        <title>The 10q25.3-26.1 gene encoding the orphan G protein-coupled receptor GPR26 is epigenetically silenced in human gliomas.</title>
        <authorList>
            <person name="Boulay J.L."/>
            <person name="Labuhn M."/>
            <person name="Jones G."/>
            <person name="Maier D."/>
            <person name="Merlo A."/>
        </authorList>
    </citation>
    <scope>NUCLEOTIDE SEQUENCE [MRNA]</scope>
    <source>
        <tissue>Brain</tissue>
    </source>
</reference>
<reference key="3">
    <citation type="journal article" date="2004" name="Genome Res.">
        <title>The status, quality, and expansion of the NIH full-length cDNA project: the Mammalian Gene Collection (MGC).</title>
        <authorList>
            <consortium name="The MGC Project Team"/>
        </authorList>
    </citation>
    <scope>NUCLEOTIDE SEQUENCE [LARGE SCALE MRNA]</scope>
    <source>
        <tissue>Brain</tissue>
    </source>
</reference>
<reference key="4">
    <citation type="journal article" date="2007" name="Biochim. Biophys. Acta">
        <title>Tissue distribution and functional analyses of the constitutively active orphan G protein coupled receptors, GPR26 and GPR78.</title>
        <authorList>
            <person name="Jones P.G."/>
            <person name="Nawoschik S.P."/>
            <person name="Sreekumar K."/>
            <person name="Uveges A.J."/>
            <person name="Tseng E."/>
            <person name="Zhang L."/>
            <person name="Johnson J."/>
            <person name="He L."/>
            <person name="Paulsen J.E."/>
            <person name="Bates B."/>
            <person name="Pausch M.H."/>
        </authorList>
    </citation>
    <scope>FUNCTION</scope>
    <scope>TISSUE SPECIFICITY</scope>
    <scope>MUTAGENESIS OF ARG-104 AND ARG-236</scope>
</reference>
<reference key="5">
    <citation type="journal article" date="2008" name="Mol. Cell. Probes">
        <title>GPR26: a marker for primary glioblastoma?</title>
        <authorList>
            <person name="Carter A.N."/>
            <person name="Cole C.L."/>
            <person name="Playle A.G."/>
            <person name="Ramsay E.J."/>
            <person name="Shervington A.A."/>
        </authorList>
    </citation>
    <scope>TISSUE SPECIFICITY</scope>
</reference>
<proteinExistence type="evidence at protein level"/>
<gene>
    <name type="primary">GPR26</name>
</gene>
<sequence length="337" mass="37604">MNSWDAGLAGLLVGTMGVSLLSNALVLLCLLHSADIRRQAPALFTLNLTCGNLLCTVVNMPLTLAGVVAQRQPAGDRLCRLAAFLDTFLAANSMLSMAALSIDRWVAVVFPLSYRAKMRLRDAALMVAYTWLHALTFPAAALALSWLGFHQLYASCTLCSRRPDERLRFAVFTGAFHALSFLLSFVVLCCTYLKVLKVARFHCKRIDVITMQTLVLLVDLHPSVRERCLEEQKRRRQRATKKISTFIGTFLVCFAPYVITRLVELFSTVPIGSHWGVLSKCLAYSKAASDPFVYSLLRHQYRKSCKEILNRLLHRRSIHSSGLTGDSHSQNILPVSE</sequence>
<accession>Q8NDV2</accession>
<accession>Q2M2E2</accession>